<sequence length="236" mass="26449">MIELVIVSRLLEYPDAALWQHQQEMFEAIAASKNLPKEDAHALGIFLRDLTTMDPLDAQAQYSELFDRGRATSLLLFEHVHGESRDRGQAMVDLLAQYEQHGLQLNSRELPDHLPLYLEYLAQLPQSEAVEGLKDIAPILALLSARLQQRESRYAVLFDLLLKLANTAIDSDKVAEKIADEARDDTPQALDAVWEEEQVKFFADKGCGDSAITAHQRRFAGAVAPQYLNITTGGQH</sequence>
<comment type="function">
    <text evidence="1 2 3 4">Chaperone required for proper molybdenum cofactor insertion and final assembly of the membrane-bound respiratory nitrate reductase 1. Required for the insertion of the molybdenum into the apo-NarG subunit, maybe by keeping NarG in an appropriate competent-open conformation for the molybdenum cofactor insertion to occur. NarJ maintains the apoNarGH complex in a soluble state. Upon insertion of the molybdenum cofactor, NarJ seems to dissociate from the activated soluble NarGH complex, before its association with the NarI subunit on the membrane.</text>
</comment>
<comment type="subunit">
    <text evidence="1 3 4">Binds specifically to the NarG subunit of the apoenzyme complex at two distinct sites, one interfering with membrane anchoring and another being involved in molybdenum insertion.</text>
</comment>
<comment type="interaction">
    <interactant intactId="EBI-555043">
        <id>P0AF26</id>
    </interactant>
    <interactant intactId="EBI-547248">
        <id>P09152</id>
        <label>narG</label>
    </interactant>
    <organismsDiffer>false</organismsDiffer>
    <experiments>18</experiments>
</comment>
<comment type="interaction">
    <interactant intactId="EBI-555043">
        <id>P0AF26</id>
    </interactant>
    <interactant intactId="EBI-547262">
        <id>P19319</id>
        <label>narZ</label>
    </interactant>
    <organismsDiffer>false</organismsDiffer>
    <experiments>3</experiments>
</comment>
<comment type="subcellular location">
    <subcellularLocation>
        <location evidence="3">Cytoplasm</location>
    </subcellularLocation>
</comment>
<comment type="similarity">
    <text evidence="5">Belongs to the NarJ/NarW family.</text>
</comment>
<evidence type="ECO:0000269" key="1">
    <source>
    </source>
</evidence>
<evidence type="ECO:0000269" key="2">
    <source>
    </source>
</evidence>
<evidence type="ECO:0000269" key="3">
    <source>
    </source>
</evidence>
<evidence type="ECO:0000269" key="4">
    <source>
    </source>
</evidence>
<evidence type="ECO:0000305" key="5"/>
<name>NARJ_ECOLI</name>
<protein>
    <recommendedName>
        <fullName>Nitrate reductase molybdenum cofactor assembly chaperone NarJ</fullName>
    </recommendedName>
    <alternativeName>
        <fullName>Redox enzyme maturation protein NarJ</fullName>
    </alternativeName>
</protein>
<dbReference type="EMBL" id="M20147">
    <property type="protein sequence ID" value="AAA24196.1"/>
    <property type="molecule type" value="Genomic_DNA"/>
</dbReference>
<dbReference type="EMBL" id="U00096">
    <property type="protein sequence ID" value="AAC74310.1"/>
    <property type="molecule type" value="Genomic_DNA"/>
</dbReference>
<dbReference type="EMBL" id="AP009048">
    <property type="protein sequence ID" value="BAA36096.1"/>
    <property type="molecule type" value="Genomic_DNA"/>
</dbReference>
<dbReference type="EMBL" id="X16181">
    <property type="protein sequence ID" value="CAA34305.1"/>
    <property type="molecule type" value="Genomic_DNA"/>
</dbReference>
<dbReference type="PIR" id="B27737">
    <property type="entry name" value="BVECJ"/>
</dbReference>
<dbReference type="RefSeq" id="NP_415744.1">
    <property type="nucleotide sequence ID" value="NC_000913.3"/>
</dbReference>
<dbReference type="RefSeq" id="WP_000571681.1">
    <property type="nucleotide sequence ID" value="NZ_SSZK01000010.1"/>
</dbReference>
<dbReference type="PDB" id="8JZD">
    <property type="method" value="X-ray"/>
    <property type="resolution" value="2.45 A"/>
    <property type="chains" value="A/C=1-183"/>
</dbReference>
<dbReference type="PDBsum" id="8JZD"/>
<dbReference type="SMR" id="P0AF26"/>
<dbReference type="BioGRID" id="4262232">
    <property type="interactions" value="16"/>
</dbReference>
<dbReference type="BioGRID" id="850174">
    <property type="interactions" value="1"/>
</dbReference>
<dbReference type="DIP" id="DIP-35943N"/>
<dbReference type="FunCoup" id="P0AF26">
    <property type="interactions" value="220"/>
</dbReference>
<dbReference type="IntAct" id="P0AF26">
    <property type="interactions" value="11"/>
</dbReference>
<dbReference type="MINT" id="P0AF26"/>
<dbReference type="STRING" id="511145.b1226"/>
<dbReference type="jPOST" id="P0AF26"/>
<dbReference type="PaxDb" id="511145-b1226"/>
<dbReference type="EnsemblBacteria" id="AAC74310">
    <property type="protein sequence ID" value="AAC74310"/>
    <property type="gene ID" value="b1226"/>
</dbReference>
<dbReference type="GeneID" id="945807"/>
<dbReference type="KEGG" id="ecj:JW1217"/>
<dbReference type="KEGG" id="eco:b1226"/>
<dbReference type="KEGG" id="ecoc:C3026_07210"/>
<dbReference type="PATRIC" id="fig|1411691.4.peg.1055"/>
<dbReference type="EchoBASE" id="EB0635"/>
<dbReference type="eggNOG" id="COG2180">
    <property type="taxonomic scope" value="Bacteria"/>
</dbReference>
<dbReference type="HOGENOM" id="CLU_084469_0_0_6"/>
<dbReference type="InParanoid" id="P0AF26"/>
<dbReference type="OMA" id="CELFDRG"/>
<dbReference type="OrthoDB" id="8478585at2"/>
<dbReference type="PhylomeDB" id="P0AF26"/>
<dbReference type="BioCyc" id="EcoCyc:NARJ-MONOMER"/>
<dbReference type="BRENDA" id="1.7.5.1">
    <property type="organism ID" value="2026"/>
</dbReference>
<dbReference type="PHI-base" id="PHI:10514"/>
<dbReference type="PRO" id="PR:P0AF26"/>
<dbReference type="Proteomes" id="UP000000625">
    <property type="component" value="Chromosome"/>
</dbReference>
<dbReference type="GO" id="GO:0005737">
    <property type="term" value="C:cytoplasm"/>
    <property type="evidence" value="ECO:0000314"/>
    <property type="project" value="UniProtKB"/>
</dbReference>
<dbReference type="GO" id="GO:0016530">
    <property type="term" value="F:metallochaperone activity"/>
    <property type="evidence" value="ECO:0000315"/>
    <property type="project" value="EcoCyc"/>
</dbReference>
<dbReference type="GO" id="GO:0051082">
    <property type="term" value="F:unfolded protein binding"/>
    <property type="evidence" value="ECO:0007669"/>
    <property type="project" value="InterPro"/>
</dbReference>
<dbReference type="GO" id="GO:0051131">
    <property type="term" value="P:chaperone-mediated protein complex assembly"/>
    <property type="evidence" value="ECO:0000314"/>
    <property type="project" value="UniProtKB"/>
</dbReference>
<dbReference type="GO" id="GO:0042128">
    <property type="term" value="P:nitrate assimilation"/>
    <property type="evidence" value="ECO:0000314"/>
    <property type="project" value="UniProtKB"/>
</dbReference>
<dbReference type="FunFam" id="1.10.3480.10:FF:000001">
    <property type="entry name" value="Nitrate reductase molybdenum cofactor assembly chaperone"/>
    <property type="match status" value="1"/>
</dbReference>
<dbReference type="Gene3D" id="1.10.3480.10">
    <property type="entry name" value="TorD-like"/>
    <property type="match status" value="1"/>
</dbReference>
<dbReference type="InterPro" id="IPR020945">
    <property type="entry name" value="DMSO/NO3_reduct_chaperone"/>
</dbReference>
<dbReference type="InterPro" id="IPR003765">
    <property type="entry name" value="NO3_reductase_chaperone_NarJ"/>
</dbReference>
<dbReference type="InterPro" id="IPR036411">
    <property type="entry name" value="TorD-like_sf"/>
</dbReference>
<dbReference type="NCBIfam" id="TIGR00684">
    <property type="entry name" value="narJ"/>
    <property type="match status" value="1"/>
</dbReference>
<dbReference type="PANTHER" id="PTHR43680">
    <property type="entry name" value="NITRATE REDUCTASE MOLYBDENUM COFACTOR ASSEMBLY CHAPERONE"/>
    <property type="match status" value="1"/>
</dbReference>
<dbReference type="PANTHER" id="PTHR43680:SF2">
    <property type="entry name" value="NITRATE REDUCTASE MOLYBDENUM COFACTOR ASSEMBLY CHAPERONE NARJ"/>
    <property type="match status" value="1"/>
</dbReference>
<dbReference type="Pfam" id="PF02613">
    <property type="entry name" value="Nitrate_red_del"/>
    <property type="match status" value="1"/>
</dbReference>
<dbReference type="SUPFAM" id="SSF89155">
    <property type="entry name" value="TorD-like"/>
    <property type="match status" value="1"/>
</dbReference>
<keyword id="KW-0002">3D-structure</keyword>
<keyword id="KW-0143">Chaperone</keyword>
<keyword id="KW-0963">Cytoplasm</keyword>
<keyword id="KW-0534">Nitrate assimilation</keyword>
<keyword id="KW-1185">Reference proteome</keyword>
<proteinExistence type="evidence at protein level"/>
<gene>
    <name type="primary">narJ</name>
    <name type="ordered locus">b1226</name>
    <name type="ordered locus">JW1217</name>
</gene>
<reference key="1">
    <citation type="journal article" date="1988" name="J. Bacteriol.">
        <title>narI region of the Escherichia coli nitrate reductase (nar) operon contains two genes.</title>
        <authorList>
            <person name="Sodergren E.J."/>
            <person name="Demoss J.A."/>
        </authorList>
    </citation>
    <scope>NUCLEOTIDE SEQUENCE [GENOMIC DNA]</scope>
</reference>
<reference key="2">
    <citation type="journal article" date="1996" name="DNA Res.">
        <title>A 718-kb DNA sequence of the Escherichia coli K-12 genome corresponding to the 12.7-28.0 min region on the linkage map.</title>
        <authorList>
            <person name="Oshima T."/>
            <person name="Aiba H."/>
            <person name="Baba T."/>
            <person name="Fujita K."/>
            <person name="Hayashi K."/>
            <person name="Honjo A."/>
            <person name="Ikemoto K."/>
            <person name="Inada T."/>
            <person name="Itoh T."/>
            <person name="Kajihara M."/>
            <person name="Kanai K."/>
            <person name="Kashimoto K."/>
            <person name="Kimura S."/>
            <person name="Kitagawa M."/>
            <person name="Makino K."/>
            <person name="Masuda S."/>
            <person name="Miki T."/>
            <person name="Mizobuchi K."/>
            <person name="Mori H."/>
            <person name="Motomura K."/>
            <person name="Nakamura Y."/>
            <person name="Nashimoto H."/>
            <person name="Nishio Y."/>
            <person name="Saito N."/>
            <person name="Sampei G."/>
            <person name="Seki Y."/>
            <person name="Tagami H."/>
            <person name="Takemoto K."/>
            <person name="Wada C."/>
            <person name="Yamamoto Y."/>
            <person name="Yano M."/>
            <person name="Horiuchi T."/>
        </authorList>
    </citation>
    <scope>NUCLEOTIDE SEQUENCE [LARGE SCALE GENOMIC DNA]</scope>
    <source>
        <strain>K12 / W3110 / ATCC 27325 / DSM 5911</strain>
    </source>
</reference>
<reference key="3">
    <citation type="journal article" date="1997" name="Science">
        <title>The complete genome sequence of Escherichia coli K-12.</title>
        <authorList>
            <person name="Blattner F.R."/>
            <person name="Plunkett G. III"/>
            <person name="Bloch C.A."/>
            <person name="Perna N.T."/>
            <person name="Burland V."/>
            <person name="Riley M."/>
            <person name="Collado-Vides J."/>
            <person name="Glasner J.D."/>
            <person name="Rode C.K."/>
            <person name="Mayhew G.F."/>
            <person name="Gregor J."/>
            <person name="Davis N.W."/>
            <person name="Kirkpatrick H.A."/>
            <person name="Goeden M.A."/>
            <person name="Rose D.J."/>
            <person name="Mau B."/>
            <person name="Shao Y."/>
        </authorList>
    </citation>
    <scope>NUCLEOTIDE SEQUENCE [LARGE SCALE GENOMIC DNA]</scope>
    <source>
        <strain>K12 / MG1655 / ATCC 47076</strain>
    </source>
</reference>
<reference key="4">
    <citation type="journal article" date="2006" name="Mol. Syst. Biol.">
        <title>Highly accurate genome sequences of Escherichia coli K-12 strains MG1655 and W3110.</title>
        <authorList>
            <person name="Hayashi K."/>
            <person name="Morooka N."/>
            <person name="Yamamoto Y."/>
            <person name="Fujita K."/>
            <person name="Isono K."/>
            <person name="Choi S."/>
            <person name="Ohtsubo E."/>
            <person name="Baba T."/>
            <person name="Wanner B.L."/>
            <person name="Mori H."/>
            <person name="Horiuchi T."/>
        </authorList>
    </citation>
    <scope>NUCLEOTIDE SEQUENCE [LARGE SCALE GENOMIC DNA]</scope>
    <source>
        <strain>K12 / W3110 / ATCC 27325 / DSM 5911</strain>
    </source>
</reference>
<reference key="5">
    <citation type="journal article" date="1989" name="Mol. Gen. Genet.">
        <title>Nitrate reductase of Escherichia coli: completion of the nucleotide sequence of the nar operon and reassessment of the role of the alpha and beta subunits in iron binding and electron transfer.</title>
        <authorList>
            <person name="Blasco F."/>
            <person name="Iobbi C."/>
            <person name="Giordano G."/>
            <person name="Chippaux M."/>
            <person name="Bonnefoy V."/>
        </authorList>
    </citation>
    <scope>NUCLEOTIDE SEQUENCE [GENOMIC DNA] OF 1-50</scope>
    <source>
        <strain>K12 / TG1</strain>
    </source>
</reference>
<reference key="6">
    <citation type="journal article" date="1992" name="J. Bacteriol.">
        <title>The narJ gene product is required for biogenesis of respiratory nitrate reductase in Escherichia coli.</title>
        <authorList>
            <person name="Dubourdieu M."/>
            <person name="Demoss J.A."/>
        </authorList>
    </citation>
    <scope>FUNCTION</scope>
</reference>
<reference key="7">
    <citation type="journal article" date="1997" name="J. Biol. Chem.">
        <title>Characterization of NarJ, a system-specific chaperone required for nitrate reductase biogenesis in Escherichia coli.</title>
        <authorList>
            <person name="Liu X."/>
            <person name="DeMoss J.A."/>
        </authorList>
    </citation>
    <scope>FUNCTION AS A CHAPERONE</scope>
    <scope>SUBUNIT</scope>
    <scope>INTERACTION WITH NARG</scope>
    <scope>SUBCELLULAR LOCATION</scope>
</reference>
<reference key="8">
    <citation type="journal article" date="1998" name="Mol. Microbiol.">
        <title>NarJ is a specific chaperone required for molybdenum cofactor assembly in nitrate reductase A of Escherichia coli.</title>
        <authorList>
            <person name="Blasco F."/>
            <person name="Dos Santos J.P."/>
            <person name="Magalon A."/>
            <person name="Frixon C."/>
            <person name="Guigliarelli B."/>
            <person name="Santini C.L."/>
            <person name="Giordano G."/>
        </authorList>
    </citation>
    <scope>FUNCTION AS A CHAPERONE</scope>
    <scope>SUBUNIT</scope>
    <scope>INTERACTION WITH NARG</scope>
</reference>
<reference key="9">
    <citation type="journal article" date="2006" name="Biochem. Biophys. Res. Commun.">
        <title>Twin-arginine translocase may have a role in the chaperone function of NarJ from Escherichia coli.</title>
        <authorList>
            <person name="Chan C.S."/>
            <person name="Howell J.M."/>
            <person name="Workentine M.L."/>
            <person name="Turner R.J."/>
        </authorList>
    </citation>
    <scope>INTERACTION WITH NARG</scope>
</reference>
<reference key="10">
    <citation type="journal article" date="2006" name="J. Biol. Chem.">
        <title>NarJ chaperone binds on two distinct sites of the aponitrate reductase of Escherichia coli to coordinate molybdenum cofactor insertion and assembly.</title>
        <authorList>
            <person name="Vergnes A."/>
            <person name="Pommier J."/>
            <person name="Toci R."/>
            <person name="Blasco F."/>
            <person name="Giordano G."/>
            <person name="Magalon A."/>
        </authorList>
    </citation>
    <scope>FUNCTION</scope>
    <scope>SUBUNIT</scope>
    <scope>INTERACTION WITH NARG</scope>
    <source>
        <strain>K12 / MC4100 / JA176</strain>
    </source>
</reference>
<reference key="11">
    <citation type="journal article" date="2010" name="FEBS J.">
        <title>Basis of recognition between the NarJ chaperone and the N-terminus of the NarG subunit from Escherichia coli nitrate reductase.</title>
        <authorList>
            <person name="Zakian S."/>
            <person name="Lafitte D."/>
            <person name="Vergnes A."/>
            <person name="Pimentel C."/>
            <person name="Sebban-Kreuzer C."/>
            <person name="Toci R."/>
            <person name="Claude J.B."/>
            <person name="Guerlesquin F."/>
            <person name="Magalon A."/>
        </authorList>
    </citation>
    <scope>INTERACTION WITH NARG</scope>
</reference>
<accession>P0AF26</accession>
<accession>P11351</accession>
<feature type="chain" id="PRO_0000096725" description="Nitrate reductase molybdenum cofactor assembly chaperone NarJ">
    <location>
        <begin position="1"/>
        <end position="236"/>
    </location>
</feature>
<organism>
    <name type="scientific">Escherichia coli (strain K12)</name>
    <dbReference type="NCBI Taxonomy" id="83333"/>
    <lineage>
        <taxon>Bacteria</taxon>
        <taxon>Pseudomonadati</taxon>
        <taxon>Pseudomonadota</taxon>
        <taxon>Gammaproteobacteria</taxon>
        <taxon>Enterobacterales</taxon>
        <taxon>Enterobacteriaceae</taxon>
        <taxon>Escherichia</taxon>
    </lineage>
</organism>